<feature type="initiator methionine" description="Removed" evidence="2">
    <location>
        <position position="1"/>
    </location>
</feature>
<feature type="chain" id="PRO_0000324341" description="CDKN2A-interacting protein">
    <location>
        <begin position="2"/>
        <end position="570"/>
    </location>
</feature>
<feature type="domain" description="XRN2-binding (XTBD)" evidence="4">
    <location>
        <begin position="19"/>
        <end position="126"/>
    </location>
</feature>
<feature type="domain" description="DRBM" evidence="3">
    <location>
        <begin position="452"/>
        <end position="527"/>
    </location>
</feature>
<feature type="region of interest" description="Disordered" evidence="5">
    <location>
        <begin position="122"/>
        <end position="345"/>
    </location>
</feature>
<feature type="region of interest" description="Disordered" evidence="5">
    <location>
        <begin position="383"/>
        <end position="407"/>
    </location>
</feature>
<feature type="compositionally biased region" description="Basic and acidic residues" evidence="5">
    <location>
        <begin position="147"/>
        <end position="162"/>
    </location>
</feature>
<feature type="compositionally biased region" description="Low complexity" evidence="5">
    <location>
        <begin position="167"/>
        <end position="183"/>
    </location>
</feature>
<feature type="compositionally biased region" description="Polar residues" evidence="5">
    <location>
        <begin position="184"/>
        <end position="198"/>
    </location>
</feature>
<feature type="compositionally biased region" description="Low complexity" evidence="5">
    <location>
        <begin position="203"/>
        <end position="221"/>
    </location>
</feature>
<feature type="compositionally biased region" description="Basic and acidic residues" evidence="5">
    <location>
        <begin position="224"/>
        <end position="233"/>
    </location>
</feature>
<feature type="compositionally biased region" description="Low complexity" evidence="5">
    <location>
        <begin position="234"/>
        <end position="248"/>
    </location>
</feature>
<feature type="compositionally biased region" description="Low complexity" evidence="5">
    <location>
        <begin position="271"/>
        <end position="301"/>
    </location>
</feature>
<feature type="compositionally biased region" description="Polar residues" evidence="5">
    <location>
        <begin position="302"/>
        <end position="317"/>
    </location>
</feature>
<feature type="compositionally biased region" description="Low complexity" evidence="5">
    <location>
        <begin position="318"/>
        <end position="345"/>
    </location>
</feature>
<feature type="modified residue" description="N-acetylalanine" evidence="2">
    <location>
        <position position="2"/>
    </location>
</feature>
<feature type="modified residue" description="Phosphoserine" evidence="2">
    <location>
        <position position="124"/>
    </location>
</feature>
<feature type="modified residue" description="Phosphoserine" evidence="1">
    <location>
        <position position="234"/>
    </location>
</feature>
<feature type="modified residue" description="Phosphoserine" evidence="2">
    <location>
        <position position="378"/>
    </location>
</feature>
<feature type="cross-link" description="Glycyl lysine isopeptide (Lys-Gly) (interchain with G-Cter in SUMO1)" evidence="2">
    <location>
        <position position="176"/>
    </location>
</feature>
<feature type="splice variant" id="VSP_032223" description="In isoform 2." evidence="6">
    <original>VK</original>
    <variation>KG</variation>
    <location>
        <begin position="118"/>
        <end position="119"/>
    </location>
</feature>
<feature type="splice variant" id="VSP_032224" description="In isoform 2." evidence="6">
    <location>
        <begin position="120"/>
        <end position="570"/>
    </location>
</feature>
<accession>Q5U2X0</accession>
<accession>Q4KM89</accession>
<organism>
    <name type="scientific">Rattus norvegicus</name>
    <name type="common">Rat</name>
    <dbReference type="NCBI Taxonomy" id="10116"/>
    <lineage>
        <taxon>Eukaryota</taxon>
        <taxon>Metazoa</taxon>
        <taxon>Chordata</taxon>
        <taxon>Craniata</taxon>
        <taxon>Vertebrata</taxon>
        <taxon>Euteleostomi</taxon>
        <taxon>Mammalia</taxon>
        <taxon>Eutheria</taxon>
        <taxon>Euarchontoglires</taxon>
        <taxon>Glires</taxon>
        <taxon>Rodentia</taxon>
        <taxon>Myomorpha</taxon>
        <taxon>Muroidea</taxon>
        <taxon>Muridae</taxon>
        <taxon>Murinae</taxon>
        <taxon>Rattus</taxon>
    </lineage>
</organism>
<gene>
    <name type="primary">Cdkn2aip</name>
    <name type="synonym">Carf</name>
</gene>
<keyword id="KW-0007">Acetylation</keyword>
<keyword id="KW-0025">Alternative splicing</keyword>
<keyword id="KW-1017">Isopeptide bond</keyword>
<keyword id="KW-0539">Nucleus</keyword>
<keyword id="KW-0597">Phosphoprotein</keyword>
<keyword id="KW-1185">Reference proteome</keyword>
<keyword id="KW-0694">RNA-binding</keyword>
<keyword id="KW-0832">Ubl conjugation</keyword>
<reference key="1">
    <citation type="journal article" date="2004" name="Genome Res.">
        <title>The status, quality, and expansion of the NIH full-length cDNA project: the Mammalian Gene Collection (MGC).</title>
        <authorList>
            <consortium name="The MGC Project Team"/>
        </authorList>
    </citation>
    <scope>NUCLEOTIDE SEQUENCE [LARGE SCALE MRNA] (ISOFORMS 1 AND 2)</scope>
    <source>
        <tissue>Testis</tissue>
        <tissue>Thymus</tissue>
    </source>
</reference>
<reference key="2">
    <citation type="journal article" date="2006" name="Proc. Natl. Acad. Sci. U.S.A.">
        <title>Quantitative phosphoproteomics of vasopressin-sensitive renal cells: regulation of aquaporin-2 phosphorylation at two sites.</title>
        <authorList>
            <person name="Hoffert J.D."/>
            <person name="Pisitkun T."/>
            <person name="Wang G."/>
            <person name="Shen R.-F."/>
            <person name="Knepper M.A."/>
        </authorList>
    </citation>
    <scope>IDENTIFICATION BY MASS SPECTROMETRY [LARGE SCALE ANALYSIS]</scope>
</reference>
<evidence type="ECO:0000250" key="1">
    <source>
        <dbReference type="UniProtKB" id="Q8BI72"/>
    </source>
</evidence>
<evidence type="ECO:0000250" key="2">
    <source>
        <dbReference type="UniProtKB" id="Q9NXV6"/>
    </source>
</evidence>
<evidence type="ECO:0000255" key="3">
    <source>
        <dbReference type="PROSITE-ProRule" id="PRU00266"/>
    </source>
</evidence>
<evidence type="ECO:0000255" key="4">
    <source>
        <dbReference type="PROSITE-ProRule" id="PRU01171"/>
    </source>
</evidence>
<evidence type="ECO:0000256" key="5">
    <source>
        <dbReference type="SAM" id="MobiDB-lite"/>
    </source>
</evidence>
<evidence type="ECO:0000303" key="6">
    <source>
    </source>
</evidence>
<evidence type="ECO:0000305" key="7"/>
<name>CARF_RAT</name>
<protein>
    <recommendedName>
        <fullName>CDKN2A-interacting protein</fullName>
    </recommendedName>
    <alternativeName>
        <fullName>Collaborator of ARF</fullName>
    </alternativeName>
</protein>
<dbReference type="EMBL" id="BC085832">
    <property type="protein sequence ID" value="AAH85832.1"/>
    <property type="molecule type" value="mRNA"/>
</dbReference>
<dbReference type="EMBL" id="BC098694">
    <property type="protein sequence ID" value="AAH98694.1"/>
    <property type="molecule type" value="mRNA"/>
</dbReference>
<dbReference type="RefSeq" id="NP_001014022.1">
    <molecule id="Q5U2X0-1"/>
    <property type="nucleotide sequence ID" value="NM_001014000.1"/>
</dbReference>
<dbReference type="RefSeq" id="XP_006253209.1">
    <molecule id="Q5U2X0-2"/>
    <property type="nucleotide sequence ID" value="XM_006253147.5"/>
</dbReference>
<dbReference type="SMR" id="Q5U2X0"/>
<dbReference type="FunCoup" id="Q5U2X0">
    <property type="interactions" value="3577"/>
</dbReference>
<dbReference type="STRING" id="10116.ENSRNOP00000029705"/>
<dbReference type="iPTMnet" id="Q5U2X0"/>
<dbReference type="PhosphoSitePlus" id="Q5U2X0"/>
<dbReference type="jPOST" id="Q5U2X0"/>
<dbReference type="PaxDb" id="10116-ENSRNOP00000029705"/>
<dbReference type="PeptideAtlas" id="Q5U2X0"/>
<dbReference type="Ensembl" id="ENSRNOT00000030519.5">
    <molecule id="Q5U2X0-1"/>
    <property type="protein sequence ID" value="ENSRNOP00000029705.4"/>
    <property type="gene ID" value="ENSRNOG00000022736.6"/>
</dbReference>
<dbReference type="GeneID" id="306455"/>
<dbReference type="KEGG" id="rno:306455"/>
<dbReference type="AGR" id="RGD:1305302"/>
<dbReference type="CTD" id="55602"/>
<dbReference type="RGD" id="1305302">
    <property type="gene designation" value="Cdkn2aip"/>
</dbReference>
<dbReference type="eggNOG" id="ENOG502S4FT">
    <property type="taxonomic scope" value="Eukaryota"/>
</dbReference>
<dbReference type="GeneTree" id="ENSGT00940000158376"/>
<dbReference type="HOGENOM" id="CLU_019689_0_0_1"/>
<dbReference type="InParanoid" id="Q5U2X0"/>
<dbReference type="OMA" id="PNMAQEV"/>
<dbReference type="OrthoDB" id="2359216at2759"/>
<dbReference type="PhylomeDB" id="Q5U2X0"/>
<dbReference type="TreeFam" id="TF333807"/>
<dbReference type="PRO" id="PR:Q5U2X0"/>
<dbReference type="Proteomes" id="UP000002494">
    <property type="component" value="Chromosome 16"/>
</dbReference>
<dbReference type="Bgee" id="ENSRNOG00000022736">
    <property type="expression patterns" value="Expressed in testis and 19 other cell types or tissues"/>
</dbReference>
<dbReference type="GO" id="GO:0001652">
    <property type="term" value="C:granular component"/>
    <property type="evidence" value="ECO:0000266"/>
    <property type="project" value="RGD"/>
</dbReference>
<dbReference type="GO" id="GO:0005730">
    <property type="term" value="C:nucleolus"/>
    <property type="evidence" value="ECO:0000266"/>
    <property type="project" value="RGD"/>
</dbReference>
<dbReference type="GO" id="GO:0005654">
    <property type="term" value="C:nucleoplasm"/>
    <property type="evidence" value="ECO:0000318"/>
    <property type="project" value="GO_Central"/>
</dbReference>
<dbReference type="GO" id="GO:0005634">
    <property type="term" value="C:nucleus"/>
    <property type="evidence" value="ECO:0000266"/>
    <property type="project" value="RGD"/>
</dbReference>
<dbReference type="GO" id="GO:0002039">
    <property type="term" value="F:p53 binding"/>
    <property type="evidence" value="ECO:0000266"/>
    <property type="project" value="RGD"/>
</dbReference>
<dbReference type="GO" id="GO:0003723">
    <property type="term" value="F:RNA binding"/>
    <property type="evidence" value="ECO:0007669"/>
    <property type="project" value="UniProtKB-KW"/>
</dbReference>
<dbReference type="GO" id="GO:0006974">
    <property type="term" value="P:DNA damage response"/>
    <property type="evidence" value="ECO:0000250"/>
    <property type="project" value="UniProtKB"/>
</dbReference>
<dbReference type="GO" id="GO:0030308">
    <property type="term" value="P:negative regulation of cell growth"/>
    <property type="evidence" value="ECO:0000266"/>
    <property type="project" value="RGD"/>
</dbReference>
<dbReference type="GO" id="GO:0030307">
    <property type="term" value="P:positive regulation of cell growth"/>
    <property type="evidence" value="ECO:0000250"/>
    <property type="project" value="UniProtKB"/>
</dbReference>
<dbReference type="GO" id="GO:0009967">
    <property type="term" value="P:positive regulation of signal transduction"/>
    <property type="evidence" value="ECO:0000266"/>
    <property type="project" value="RGD"/>
</dbReference>
<dbReference type="GO" id="GO:0031647">
    <property type="term" value="P:regulation of protein stability"/>
    <property type="evidence" value="ECO:0000266"/>
    <property type="project" value="RGD"/>
</dbReference>
<dbReference type="InterPro" id="IPR014720">
    <property type="entry name" value="dsRBD_dom"/>
</dbReference>
<dbReference type="InterPro" id="IPR021859">
    <property type="entry name" value="XTBD"/>
</dbReference>
<dbReference type="PANTHER" id="PTHR16148:SF11">
    <property type="entry name" value="CDKN2A-INTERACTING PROTEIN"/>
    <property type="match status" value="1"/>
</dbReference>
<dbReference type="PANTHER" id="PTHR16148">
    <property type="entry name" value="NF-KAPPA-B-REPRESSING FACTOR-RELATED"/>
    <property type="match status" value="1"/>
</dbReference>
<dbReference type="Pfam" id="PF11952">
    <property type="entry name" value="XTBD"/>
    <property type="match status" value="1"/>
</dbReference>
<dbReference type="PROSITE" id="PS50137">
    <property type="entry name" value="DS_RBD"/>
    <property type="match status" value="1"/>
</dbReference>
<dbReference type="PROSITE" id="PS51827">
    <property type="entry name" value="XTBD"/>
    <property type="match status" value="1"/>
</dbReference>
<comment type="function">
    <text evidence="2">Regulates DNA damage response and cell proliferation in a dose-dependent manner through a number of signaling pathways involved in cell proliferation, apoptosis and senescence.</text>
</comment>
<comment type="subunit">
    <text evidence="2">Interacts with CDKN2A/p14ARF, p53/TP53 and MDM2. Interacts with CHEK2 and MAPK3. Interacts with XRN2.</text>
</comment>
<comment type="subcellular location">
    <subcellularLocation>
        <location evidence="2">Nucleus</location>
        <location evidence="2">Nucleoplasm</location>
    </subcellularLocation>
</comment>
<comment type="alternative products">
    <event type="alternative splicing"/>
    <isoform>
        <id>Q5U2X0-1</id>
        <name>1</name>
        <sequence type="displayed"/>
    </isoform>
    <isoform>
        <id>Q5U2X0-2</id>
        <name>2</name>
        <sequence type="described" ref="VSP_032223 VSP_032224"/>
    </isoform>
</comment>
<comment type="PTM">
    <text evidence="2">May be ubiquitinated.</text>
</comment>
<comment type="similarity">
    <text evidence="7">Belongs to the CARF family.</text>
</comment>
<proteinExistence type="evidence at protein level"/>
<sequence length="570" mass="60744">MAQEVSEYLSQNPRVAAWVETLRCEGETDKHWRHRREFLLRNAGDLVPATEETADAESGARSRQLQQLVSFSMAWANHVFLGCRYPQKVMDKILSMAEGIKVTDAPIHTTRDELVAKVKKRGISSSNEGVEEPSKKRSIEGKNNSSVERDHGKKSAKTDRSAQQENSSGSKGSSTKSESSGTSARSNSGVSHQNSSTSEGDRSVCSQSSSNSSQVTSAGSGKASEPEAPDKHGSASFVSSLLKSSLNSHVTKSTDSRQHSGSPRKNALEGSSVSVSQSSSEIEVPLLGSSGSSEVELPLLSCKSSSETASSGLTTKASSEANISSSVSKNSSSSGTSLLMPKSSSTNTSLLTSQVAASLLASKSSSQSSGSVASKSTSLGSMSQLASKSSSQSSTSQLPSKSTSQSSESSVKFTCRKLTNEDIKQKQPFFNRLYKTVAWKLVAVGGFSPNVNHGELLNAAIEALKATLDVFFVPLKELADLPQNKSSQESIVCELRCKSVYLGTGCGKSKENAKAVASREALKLFLKKKVVVKICKRKYRGNEIEDLVLLDEESRPVNLPPALKHPQELL</sequence>